<gene>
    <name type="primary">cfr10IR</name>
</gene>
<reference key="1">
    <citation type="journal article" date="1996" name="J. Mol. Biol.">
        <title>Crystal structure of Citrobacter freundii restriction endonuclease Cfr10I at 2.15-A resolution.</title>
        <authorList>
            <person name="Bozic D."/>
            <person name="Grazulis S."/>
            <person name="Siksnys V."/>
            <person name="Huber R."/>
        </authorList>
    </citation>
    <scope>X-RAY CRYSTALLOGRAPHY (2.15 ANGSTROMS)</scope>
    <scope>FUNCTION</scope>
    <scope>SUBUNIT</scope>
    <source>
        <strain>RFL10</strain>
    </source>
</reference>
<reference key="2">
    <citation type="journal article" date="2003" name="Nucleic Acids Res.">
        <title>A nomenclature for restriction enzymes, DNA methyltransferases, homing endonucleases and their genes.</title>
        <authorList>
            <person name="Roberts R.J."/>
            <person name="Belfort M."/>
            <person name="Bestor T."/>
            <person name="Bhagwat A.S."/>
            <person name="Bickle T.A."/>
            <person name="Bitinaite J."/>
            <person name="Blumenthal R.M."/>
            <person name="Degtyarev S.K."/>
            <person name="Dryden D.T."/>
            <person name="Dybvig K."/>
            <person name="Firman K."/>
            <person name="Gromova E.S."/>
            <person name="Gumport R.I."/>
            <person name="Halford S.E."/>
            <person name="Hattman S."/>
            <person name="Heitman J."/>
            <person name="Hornby D.P."/>
            <person name="Janulaitis A."/>
            <person name="Jeltsch A."/>
            <person name="Josephsen J."/>
            <person name="Kiss A."/>
            <person name="Klaenhammer T.R."/>
            <person name="Kobayashi I."/>
            <person name="Kong H."/>
            <person name="Krueger D.H."/>
            <person name="Lacks S."/>
            <person name="Marinus M.G."/>
            <person name="Miyahara M."/>
            <person name="Morgan R.D."/>
            <person name="Murray N.E."/>
            <person name="Nagaraja V."/>
            <person name="Piekarowicz A."/>
            <person name="Pingoud A."/>
            <person name="Raleigh E."/>
            <person name="Rao D.N."/>
            <person name="Reich N."/>
            <person name="Repin V.E."/>
            <person name="Selker E.U."/>
            <person name="Shaw P.C."/>
            <person name="Stein D.C."/>
            <person name="Stoddard B.L."/>
            <person name="Szybalski W."/>
            <person name="Trautner T.A."/>
            <person name="Van Etten J.L."/>
            <person name="Vitor J.M."/>
            <person name="Wilson G.G."/>
            <person name="Xu S.Y."/>
        </authorList>
    </citation>
    <scope>NOMENCLATURE</scope>
    <scope>SUBTYPES</scope>
</reference>
<comment type="function">
    <text evidence="3 5">An F and P subtype restriction enzyme that recognizes the double-stranded sequence 5'-RCCGGY-3' and cleaves after R-1.</text>
</comment>
<comment type="catalytic activity">
    <reaction>
        <text>Endonucleolytic cleavage of DNA to give specific double-stranded fragments with terminal 5'-phosphates.</text>
        <dbReference type="EC" id="3.1.21.4"/>
    </reaction>
</comment>
<comment type="cofactor">
    <cofactor>
        <name>Mg(2+)</name>
        <dbReference type="ChEBI" id="CHEBI:18420"/>
    </cofactor>
    <text>Binds 2 magnesium ions per subunit.</text>
</comment>
<comment type="subunit">
    <text evidence="2">Homodimer.</text>
</comment>
<sequence length="285" mass="32016">MDIISKSGEGNKYTINSAIAFVAYASHIDINTTEFSKVLSGLRDFINDEAIRLGGKISDGSFNKCNGDWYEWLIGIRAIEFFLESETNFIVVKMPNATSFDVMSIYKSCLSEFIYDLRSKLSLNNVNLITSNPDFSIIDIRGRREELKSMLKDISFSNISLSTISEIDNLYKNFIDYAELEHIKSFLSVKTTFRPDRRLQLAHEGSLMKALYTHLQTRTWTINPTGIRYYAAATSIGNADVIGLKTVATHSITDVKSLPQSAVDEIFKINSVLDVDSCLSHILSS</sequence>
<proteinExistence type="evidence at protein level"/>
<keyword id="KW-0002">3D-structure</keyword>
<keyword id="KW-0255">Endonuclease</keyword>
<keyword id="KW-0378">Hydrolase</keyword>
<keyword id="KW-0460">Magnesium</keyword>
<keyword id="KW-0479">Metal-binding</keyword>
<keyword id="KW-0540">Nuclease</keyword>
<keyword id="KW-0680">Restriction system</keyword>
<dbReference type="EC" id="3.1.21.4"/>
<dbReference type="PDB" id="1CFR">
    <property type="method" value="X-ray"/>
    <property type="resolution" value="2.15 A"/>
    <property type="chains" value="A=1-285"/>
</dbReference>
<dbReference type="PDBsum" id="1CFR"/>
<dbReference type="SMR" id="P56200"/>
<dbReference type="EvolutionaryTrace" id="P56200"/>
<dbReference type="PRO" id="PR:P56200"/>
<dbReference type="GO" id="GO:0046872">
    <property type="term" value="F:metal ion binding"/>
    <property type="evidence" value="ECO:0007669"/>
    <property type="project" value="UniProtKB-KW"/>
</dbReference>
<dbReference type="GO" id="GO:0009036">
    <property type="term" value="F:type II site-specific deoxyribonuclease activity"/>
    <property type="evidence" value="ECO:0007669"/>
    <property type="project" value="UniProtKB-EC"/>
</dbReference>
<dbReference type="GO" id="GO:0009307">
    <property type="term" value="P:DNA restriction-modification system"/>
    <property type="evidence" value="ECO:0007669"/>
    <property type="project" value="UniProtKB-KW"/>
</dbReference>
<dbReference type="CDD" id="cd22314">
    <property type="entry name" value="Bse634I-like"/>
    <property type="match status" value="1"/>
</dbReference>
<dbReference type="Gene3D" id="3.40.91.10">
    <property type="match status" value="1"/>
</dbReference>
<dbReference type="InterPro" id="IPR011335">
    <property type="entry name" value="Restrct_endonuc-II-like"/>
</dbReference>
<dbReference type="InterPro" id="IPR012415">
    <property type="entry name" value="Restrct_endonuc_II_Cfr10I"/>
</dbReference>
<dbReference type="Pfam" id="PF07832">
    <property type="entry name" value="Bse634I"/>
    <property type="match status" value="1"/>
</dbReference>
<dbReference type="SUPFAM" id="SSF52980">
    <property type="entry name" value="Restriction endonuclease-like"/>
    <property type="match status" value="1"/>
</dbReference>
<accession>P56200</accession>
<evidence type="ECO:0000250" key="1"/>
<evidence type="ECO:0000269" key="2">
    <source>
    </source>
</evidence>
<evidence type="ECO:0000303" key="3">
    <source>
    </source>
</evidence>
<evidence type="ECO:0000305" key="4"/>
<evidence type="ECO:0000305" key="5">
    <source>
    </source>
</evidence>
<evidence type="ECO:0007829" key="6">
    <source>
        <dbReference type="PDB" id="1CFR"/>
    </source>
</evidence>
<feature type="chain" id="PRO_0000077295" description="Type II restriction enzyme Cfr10I">
    <location>
        <begin position="1"/>
        <end position="285"/>
    </location>
</feature>
<feature type="binding site" evidence="1">
    <location>
        <position position="134"/>
    </location>
    <ligand>
        <name>Mg(2+)</name>
        <dbReference type="ChEBI" id="CHEBI:18420"/>
        <label>1</label>
    </ligand>
</feature>
<feature type="binding site" evidence="1">
    <location>
        <position position="134"/>
    </location>
    <ligand>
        <name>Mg(2+)</name>
        <dbReference type="ChEBI" id="CHEBI:18420"/>
        <label>2</label>
    </ligand>
</feature>
<feature type="binding site" evidence="4">
    <location>
        <position position="204"/>
    </location>
    <ligand>
        <name>Mg(2+)</name>
        <dbReference type="ChEBI" id="CHEBI:18420"/>
        <label>1</label>
    </ligand>
</feature>
<feature type="strand" evidence="6">
    <location>
        <begin position="3"/>
        <end position="6"/>
    </location>
</feature>
<feature type="strand" evidence="6">
    <location>
        <begin position="12"/>
        <end position="15"/>
    </location>
</feature>
<feature type="helix" evidence="6">
    <location>
        <begin position="17"/>
        <end position="26"/>
    </location>
</feature>
<feature type="turn" evidence="6">
    <location>
        <begin position="30"/>
        <end position="32"/>
    </location>
</feature>
<feature type="helix" evidence="6">
    <location>
        <begin position="35"/>
        <end position="53"/>
    </location>
</feature>
<feature type="helix" evidence="6">
    <location>
        <begin position="59"/>
        <end position="84"/>
    </location>
</feature>
<feature type="strand" evidence="6">
    <location>
        <begin position="88"/>
        <end position="93"/>
    </location>
</feature>
<feature type="turn" evidence="6">
    <location>
        <begin position="97"/>
        <end position="99"/>
    </location>
</feature>
<feature type="helix" evidence="6">
    <location>
        <begin position="102"/>
        <end position="105"/>
    </location>
</feature>
<feature type="helix" evidence="6">
    <location>
        <begin position="108"/>
        <end position="123"/>
    </location>
</feature>
<feature type="strand" evidence="6">
    <location>
        <begin position="134"/>
        <end position="139"/>
    </location>
</feature>
<feature type="helix" evidence="6">
    <location>
        <begin position="144"/>
        <end position="150"/>
    </location>
</feature>
<feature type="turn" evidence="6">
    <location>
        <begin position="151"/>
        <end position="153"/>
    </location>
</feature>
<feature type="helix" evidence="6">
    <location>
        <begin position="161"/>
        <end position="169"/>
    </location>
</feature>
<feature type="helix" evidence="6">
    <location>
        <begin position="170"/>
        <end position="174"/>
    </location>
</feature>
<feature type="turn" evidence="6">
    <location>
        <begin position="180"/>
        <end position="182"/>
    </location>
</feature>
<feature type="strand" evidence="6">
    <location>
        <begin position="183"/>
        <end position="189"/>
    </location>
</feature>
<feature type="helix" evidence="6">
    <location>
        <begin position="195"/>
        <end position="218"/>
    </location>
</feature>
<feature type="strand" evidence="6">
    <location>
        <begin position="228"/>
        <end position="235"/>
    </location>
</feature>
<feature type="helix" evidence="6">
    <location>
        <begin position="238"/>
        <end position="244"/>
    </location>
</feature>
<feature type="helix" evidence="6">
    <location>
        <begin position="249"/>
        <end position="252"/>
    </location>
</feature>
<feature type="strand" evidence="6">
    <location>
        <begin position="261"/>
        <end position="268"/>
    </location>
</feature>
<feature type="helix" evidence="6">
    <location>
        <begin position="272"/>
        <end position="282"/>
    </location>
</feature>
<name>T2CX_CITFR</name>
<organism>
    <name type="scientific">Citrobacter freundii</name>
    <dbReference type="NCBI Taxonomy" id="546"/>
    <lineage>
        <taxon>Bacteria</taxon>
        <taxon>Pseudomonadati</taxon>
        <taxon>Pseudomonadota</taxon>
        <taxon>Gammaproteobacteria</taxon>
        <taxon>Enterobacterales</taxon>
        <taxon>Enterobacteriaceae</taxon>
        <taxon>Citrobacter</taxon>
        <taxon>Citrobacter freundii complex</taxon>
    </lineage>
</organism>
<protein>
    <recommendedName>
        <fullName evidence="3">Type II restriction enzyme Cfr10I</fullName>
        <shortName>R.Cfr10I</shortName>
        <ecNumber>3.1.21.4</ecNumber>
    </recommendedName>
    <alternativeName>
        <fullName>Endonuclease Cfr10I</fullName>
    </alternativeName>
    <alternativeName>
        <fullName>Type-2 restriction enzyme Cfr10I</fullName>
    </alternativeName>
</protein>